<reference key="1">
    <citation type="journal article" date="1988" name="Eur. J. Biochem.">
        <title>Isolation, structure and expression of cDNA and genomic clones for murine eosinophil differentiation factor. Comparison with other eosinophilopoietic lymphokines and identity with interleukin-5.</title>
        <authorList>
            <person name="Campbell H.D."/>
            <person name="Sanderson C.J."/>
            <person name="Wang Y."/>
            <person name="Hort Y."/>
            <person name="Martinson M.E."/>
            <person name="Tucker W.Q.J."/>
            <person name="Stellwagen A."/>
            <person name="Strath M."/>
            <person name="Young I.G."/>
        </authorList>
    </citation>
    <scope>NUCLEOTIDE SEQUENCE [GENOMIC DNA / MRNA] (ISOFORM 1)</scope>
</reference>
<reference key="2">
    <citation type="journal article" date="1986" name="Nature">
        <title>Cloning of complementary DNA encoding T-cell replacing factor and identity with B-cell growth factor II.</title>
        <authorList>
            <person name="Kinashi T."/>
            <person name="Harada N."/>
            <person name="Severinson E."/>
            <person name="Tanabe T."/>
            <person name="Sideras P."/>
            <person name="Konishi M."/>
            <person name="Azuma C."/>
            <person name="Tominaga A."/>
            <person name="Bergstedt-Lindqvist S."/>
            <person name="Takahashi M."/>
            <person name="Matsuda F."/>
            <person name="Yaoita Y."/>
            <person name="Takatsu K."/>
            <person name="Honjo T."/>
        </authorList>
    </citation>
    <scope>NUCLEOTIDE SEQUENCE [MRNA] (ISOFORM 1)</scope>
    <source>
        <strain>BALB/cJ</strain>
    </source>
</reference>
<reference key="3">
    <citation type="journal article" date="1988" name="Growth Factors">
        <title>Molecular cloning and structure of the mouse interleukin-5 gene.</title>
        <authorList>
            <person name="Mizuta T.R."/>
            <person name="Tanabe T."/>
            <person name="Nakakubo H."/>
            <person name="Noma T."/>
            <person name="Honjo T."/>
        </authorList>
    </citation>
    <scope>NUCLEOTIDE SEQUENCE [GENOMIC DNA] (ISOFORM 1)</scope>
</reference>
<reference key="4">
    <citation type="journal article" date="2020" name="Heliyon">
        <title>Identification of a novel splice variant for mouse and human interleukin-5.</title>
        <authorList>
            <person name="Shilovskiy I."/>
            <person name="Andreev S."/>
            <person name="Mazurov D."/>
            <person name="Barvinskaia E."/>
            <person name="Bolotova S."/>
            <person name="Nikolskii A."/>
            <person name="Sergeev I."/>
            <person name="Maerle A."/>
            <person name="Kudlay D."/>
            <person name="Khaitov M."/>
        </authorList>
    </citation>
    <scope>NUCLEOTIDE SEQUENCE [MRNA] (ISOFORM 2)</scope>
    <scope>SUBCELLULAR LOCATION</scope>
    <scope>ALTERNATIVE SPLICING</scope>
    <scope>TISSUE SPECIFICITY</scope>
</reference>
<reference key="5">
    <citation type="journal article" date="1988" name="J. Exp. Med.">
        <title>Recombinant interleukin 2 or 5, but not 3 or 4, induces maturation of resting mouse B lymphocytes and propagates proliferation of activated B cell blasts.</title>
        <authorList>
            <person name="Karasuyama H."/>
            <person name="Rolink A."/>
            <person name="Melchers F."/>
        </authorList>
    </citation>
    <scope>FUNCTION</scope>
</reference>
<reference key="6">
    <citation type="journal article" date="1990" name="Mol. Immunol.">
        <title>Structural comparison of murine T-cell (B151K12)-derived T-cell-replacing factor (IL-5) with rIL-5: dimer formation is essential for the expression of biological activity.</title>
        <authorList>
            <person name="Takahashi T."/>
            <person name="Yamaguchi N."/>
            <person name="Mita S."/>
            <person name="Yamaguchi Y."/>
            <person name="Suda T."/>
            <person name="Tominaga A."/>
            <person name="Kikuchi Y."/>
            <person name="Miura Y."/>
            <person name="Takatsu K."/>
        </authorList>
    </citation>
    <scope>GLYCOSYLATION AT ASN-46</scope>
</reference>
<reference key="7">
    <citation type="journal article" date="1991" name="Cytokine">
        <title>Analysis of interleukin 5 receptors on murine eosinophils: a comparison with receptors on B13 cells.</title>
        <authorList>
            <person name="Barry S.C."/>
            <person name="McKenzie A.N."/>
            <person name="Strath M."/>
            <person name="Sanderson C.J."/>
        </authorList>
    </citation>
    <scope>FUNCTION</scope>
    <scope>INTERACTION WITH IL5RA</scope>
</reference>
<reference key="8">
    <citation type="journal article" date="1999" name="Am. J. Physiol.">
        <title>IL-5 contributes to worm expulsion and muscle hypercontractility in a primary T. spiralis infection.</title>
        <authorList>
            <person name="Vallance B.A."/>
            <person name="Blennerhassett P.A."/>
            <person name="Deng Y."/>
            <person name="Matthaei K.I."/>
            <person name="Young I.G."/>
            <person name="Collins S.M."/>
        </authorList>
    </citation>
    <scope>DISRUPTION PHENOTYPE</scope>
    <scope>FUNCTION</scope>
</reference>
<reference evidence="11" key="9">
    <citation type="submission" date="2007-10" db="PDB data bank">
        <title>Crystal structure of murine interleukin-5.</title>
        <authorList>
            <person name="Patino E."/>
            <person name="Kraich M."/>
            <person name="Kotzsch A."/>
            <person name="Saremba S."/>
            <person name="Paschke A."/>
            <person name="Sebald W."/>
            <person name="Mueller T.D."/>
        </authorList>
    </citation>
    <scope>X-RAY CRYSTALLOGRAPHY (2.50 ANGSTROMS) OF 26-129</scope>
    <scope>DISULFIDE BONDS</scope>
</reference>
<accession>P04401</accession>
<proteinExistence type="evidence at protein level"/>
<dbReference type="EMBL" id="X06270">
    <property type="protein sequence ID" value="CAA29606.1"/>
    <property type="molecule type" value="mRNA"/>
</dbReference>
<dbReference type="EMBL" id="X06271">
    <property type="protein sequence ID" value="CAA29607.1"/>
    <property type="molecule type" value="Genomic_DNA"/>
</dbReference>
<dbReference type="EMBL" id="X04601">
    <property type="protein sequence ID" value="CAA28266.1"/>
    <property type="molecule type" value="mRNA"/>
</dbReference>
<dbReference type="CCDS" id="CCDS24685.1">
    <molecule id="P04401-1"/>
</dbReference>
<dbReference type="PIR" id="S00807">
    <property type="entry name" value="ICMS5"/>
</dbReference>
<dbReference type="RefSeq" id="NP_034688.1">
    <molecule id="P04401-1"/>
    <property type="nucleotide sequence ID" value="NM_010558.1"/>
</dbReference>
<dbReference type="PDB" id="3B5K">
    <property type="method" value="X-ray"/>
    <property type="resolution" value="2.50 A"/>
    <property type="chains" value="A/B=21-133"/>
</dbReference>
<dbReference type="PDBsum" id="3B5K"/>
<dbReference type="SMR" id="P04401"/>
<dbReference type="FunCoup" id="P04401">
    <property type="interactions" value="734"/>
</dbReference>
<dbReference type="STRING" id="10090.ENSMUSP00000043369"/>
<dbReference type="BindingDB" id="P04401"/>
<dbReference type="ChEMBL" id="CHEMBL1163111"/>
<dbReference type="DrugCentral" id="P04401"/>
<dbReference type="GlyCosmos" id="P04401">
    <property type="glycosylation" value="3 sites, No reported glycans"/>
</dbReference>
<dbReference type="GlyGen" id="P04401">
    <property type="glycosylation" value="3 sites"/>
</dbReference>
<dbReference type="iPTMnet" id="P04401"/>
<dbReference type="PhosphoSitePlus" id="P04401"/>
<dbReference type="PaxDb" id="10090-ENSMUSP00000043369"/>
<dbReference type="Antibodypedia" id="4146">
    <property type="antibodies" value="929 antibodies from 44 providers"/>
</dbReference>
<dbReference type="DNASU" id="16191"/>
<dbReference type="Ensembl" id="ENSMUST00000048605.3">
    <molecule id="P04401-1"/>
    <property type="protein sequence ID" value="ENSMUSP00000043369.3"/>
    <property type="gene ID" value="ENSMUSG00000036117.3"/>
</dbReference>
<dbReference type="GeneID" id="16191"/>
<dbReference type="KEGG" id="mmu:16191"/>
<dbReference type="UCSC" id="uc007iwv.1">
    <molecule id="P04401-1"/>
    <property type="organism name" value="mouse"/>
</dbReference>
<dbReference type="AGR" id="MGI:96557"/>
<dbReference type="CTD" id="3567"/>
<dbReference type="MGI" id="MGI:96557">
    <property type="gene designation" value="Il5"/>
</dbReference>
<dbReference type="VEuPathDB" id="HostDB:ENSMUSG00000036117"/>
<dbReference type="eggNOG" id="ENOG502RWD8">
    <property type="taxonomic scope" value="Eukaryota"/>
</dbReference>
<dbReference type="GeneTree" id="ENSGT00390000016991"/>
<dbReference type="HOGENOM" id="CLU_156269_0_0_1"/>
<dbReference type="InParanoid" id="P04401"/>
<dbReference type="OMA" id="VPTHKNH"/>
<dbReference type="OrthoDB" id="9446172at2759"/>
<dbReference type="PhylomeDB" id="P04401"/>
<dbReference type="TreeFam" id="TF338422"/>
<dbReference type="Reactome" id="R-MMU-512988">
    <property type="pathway name" value="Interleukin-3, Interleukin-5 and GM-CSF signaling"/>
</dbReference>
<dbReference type="Reactome" id="R-MMU-5673001">
    <property type="pathway name" value="RAF/MAP kinase cascade"/>
</dbReference>
<dbReference type="Reactome" id="R-MMU-912526">
    <property type="pathway name" value="Interleukin receptor SHC signaling"/>
</dbReference>
<dbReference type="BioGRID-ORCS" id="16191">
    <property type="hits" value="2 hits in 77 CRISPR screens"/>
</dbReference>
<dbReference type="EvolutionaryTrace" id="P04401"/>
<dbReference type="PRO" id="PR:P04401"/>
<dbReference type="Proteomes" id="UP000000589">
    <property type="component" value="Chromosome 11"/>
</dbReference>
<dbReference type="RNAct" id="P04401">
    <property type="molecule type" value="protein"/>
</dbReference>
<dbReference type="Bgee" id="ENSMUSG00000036117">
    <property type="expression patterns" value="Expressed in mesodermal cell in embryo and 7 other cell types or tissues"/>
</dbReference>
<dbReference type="ExpressionAtlas" id="P04401">
    <property type="expression patterns" value="baseline and differential"/>
</dbReference>
<dbReference type="GO" id="GO:0005615">
    <property type="term" value="C:extracellular space"/>
    <property type="evidence" value="ECO:0000314"/>
    <property type="project" value="MGI"/>
</dbReference>
<dbReference type="GO" id="GO:0005125">
    <property type="term" value="F:cytokine activity"/>
    <property type="evidence" value="ECO:0000314"/>
    <property type="project" value="MGI"/>
</dbReference>
<dbReference type="GO" id="GO:0008083">
    <property type="term" value="F:growth factor activity"/>
    <property type="evidence" value="ECO:0007669"/>
    <property type="project" value="UniProtKB-KW"/>
</dbReference>
<dbReference type="GO" id="GO:0005137">
    <property type="term" value="F:interleukin-5 receptor binding"/>
    <property type="evidence" value="ECO:0007669"/>
    <property type="project" value="Ensembl"/>
</dbReference>
<dbReference type="GO" id="GO:0006955">
    <property type="term" value="P:immune response"/>
    <property type="evidence" value="ECO:0007669"/>
    <property type="project" value="InterPro"/>
</dbReference>
<dbReference type="GO" id="GO:0038043">
    <property type="term" value="P:interleukin-5-mediated signaling pathway"/>
    <property type="evidence" value="ECO:0007669"/>
    <property type="project" value="Ensembl"/>
</dbReference>
<dbReference type="GO" id="GO:0030890">
    <property type="term" value="P:positive regulation of B cell proliferation"/>
    <property type="evidence" value="ECO:0007669"/>
    <property type="project" value="Ensembl"/>
</dbReference>
<dbReference type="GO" id="GO:0051091">
    <property type="term" value="P:positive regulation of DNA-binding transcription factor activity"/>
    <property type="evidence" value="ECO:0000314"/>
    <property type="project" value="BHF-UCL"/>
</dbReference>
<dbReference type="GO" id="GO:0045893">
    <property type="term" value="P:positive regulation of DNA-templated transcription"/>
    <property type="evidence" value="ECO:0000314"/>
    <property type="project" value="BHF-UCL"/>
</dbReference>
<dbReference type="GO" id="GO:0045645">
    <property type="term" value="P:positive regulation of eosinophil differentiation"/>
    <property type="evidence" value="ECO:0007669"/>
    <property type="project" value="Ensembl"/>
</dbReference>
<dbReference type="GO" id="GO:0002639">
    <property type="term" value="P:positive regulation of immunoglobulin production"/>
    <property type="evidence" value="ECO:0000316"/>
    <property type="project" value="BHF-UCL"/>
</dbReference>
<dbReference type="GO" id="GO:0071803">
    <property type="term" value="P:positive regulation of podosome assembly"/>
    <property type="evidence" value="ECO:0007669"/>
    <property type="project" value="Ensembl"/>
</dbReference>
<dbReference type="GO" id="GO:0046427">
    <property type="term" value="P:positive regulation of receptor signaling pathway via JAK-STAT"/>
    <property type="evidence" value="ECO:0007669"/>
    <property type="project" value="Ensembl"/>
</dbReference>
<dbReference type="FunFam" id="1.20.1250.10:FF:000034">
    <property type="entry name" value="Interleukin-5"/>
    <property type="match status" value="1"/>
</dbReference>
<dbReference type="Gene3D" id="1.20.1250.10">
    <property type="match status" value="1"/>
</dbReference>
<dbReference type="InterPro" id="IPR009079">
    <property type="entry name" value="4_helix_cytokine-like_core"/>
</dbReference>
<dbReference type="InterPro" id="IPR000186">
    <property type="entry name" value="IL-5"/>
</dbReference>
<dbReference type="PANTHER" id="PTHR48491">
    <property type="entry name" value="INTERLEUKIN-5"/>
    <property type="match status" value="1"/>
</dbReference>
<dbReference type="PANTHER" id="PTHR48491:SF1">
    <property type="entry name" value="INTERLEUKIN-5"/>
    <property type="match status" value="1"/>
</dbReference>
<dbReference type="Pfam" id="PF02025">
    <property type="entry name" value="IL5"/>
    <property type="match status" value="1"/>
</dbReference>
<dbReference type="PRINTS" id="PR00432">
    <property type="entry name" value="INTERLEUKIN5"/>
</dbReference>
<dbReference type="SUPFAM" id="SSF47266">
    <property type="entry name" value="4-helical cytokines"/>
    <property type="match status" value="1"/>
</dbReference>
<name>IL5_MOUSE</name>
<keyword id="KW-0002">3D-structure</keyword>
<keyword id="KW-0025">Alternative splicing</keyword>
<keyword id="KW-0202">Cytokine</keyword>
<keyword id="KW-1015">Disulfide bond</keyword>
<keyword id="KW-0325">Glycoprotein</keyword>
<keyword id="KW-0339">Growth factor</keyword>
<keyword id="KW-1185">Reference proteome</keyword>
<keyword id="KW-0964">Secreted</keyword>
<keyword id="KW-0732">Signal</keyword>
<organism>
    <name type="scientific">Mus musculus</name>
    <name type="common">Mouse</name>
    <dbReference type="NCBI Taxonomy" id="10090"/>
    <lineage>
        <taxon>Eukaryota</taxon>
        <taxon>Metazoa</taxon>
        <taxon>Chordata</taxon>
        <taxon>Craniata</taxon>
        <taxon>Vertebrata</taxon>
        <taxon>Euteleostomi</taxon>
        <taxon>Mammalia</taxon>
        <taxon>Eutheria</taxon>
        <taxon>Euarchontoglires</taxon>
        <taxon>Glires</taxon>
        <taxon>Rodentia</taxon>
        <taxon>Myomorpha</taxon>
        <taxon>Muroidea</taxon>
        <taxon>Muridae</taxon>
        <taxon>Murinae</taxon>
        <taxon>Mus</taxon>
        <taxon>Mus</taxon>
    </lineage>
</organism>
<sequence>MRRMLLHLSVLTLSCVWATAMEIPMSTVVKETLTQLSAHRALLTSNETMRLPVPTHKNHQLCIGEIFQGLDILKNQTVRGGTVEMLFQNLSLIKKYIDRQKEKCGEERRRTRQFLDYLQEFLGVMSTEWAMEG</sequence>
<protein>
    <recommendedName>
        <fullName>Interleukin-5</fullName>
        <shortName>IL-5</shortName>
    </recommendedName>
    <alternativeName>
        <fullName>B-cell growth factor II</fullName>
        <shortName>BCGF-II</shortName>
    </alternativeName>
    <alternativeName>
        <fullName>Cytotoxic T-lymphocyte inducer</fullName>
    </alternativeName>
    <alternativeName>
        <fullName>Eosinophil differentiation factor</fullName>
    </alternativeName>
    <alternativeName>
        <fullName>T-cell replacing factor</fullName>
        <shortName>TRF</shortName>
    </alternativeName>
</protein>
<feature type="signal peptide" evidence="2">
    <location>
        <begin position="1"/>
        <end position="20"/>
    </location>
</feature>
<feature type="chain" id="PRO_0000015564" description="Interleukin-5">
    <location>
        <begin position="21"/>
        <end position="133"/>
    </location>
</feature>
<feature type="glycosylation site" description="N-linked (GlcNAc...) asparagine" evidence="5">
    <location>
        <position position="46"/>
    </location>
</feature>
<feature type="glycosylation site" description="N-linked (GlcNAc...) asparagine" evidence="2">
    <location>
        <position position="75"/>
    </location>
</feature>
<feature type="glycosylation site" description="N-linked (GlcNAc...) asparagine" evidence="2">
    <location>
        <position position="89"/>
    </location>
</feature>
<feature type="disulfide bond" description="Interchain (with C-104)" evidence="8 11">
    <location>
        <position position="62"/>
    </location>
</feature>
<feature type="disulfide bond" description="Interchain (with C-62)" evidence="8 11">
    <location>
        <position position="104"/>
    </location>
</feature>
<feature type="splice variant" id="VSP_062347" description="In isoform 2." evidence="7">
    <location>
        <begin position="48"/>
        <end position="58"/>
    </location>
</feature>
<feature type="helix" evidence="12">
    <location>
        <begin position="28"/>
        <end position="38"/>
    </location>
</feature>
<feature type="helix" evidence="12">
    <location>
        <begin position="40"/>
        <end position="43"/>
    </location>
</feature>
<feature type="strand" evidence="12">
    <location>
        <begin position="50"/>
        <end position="52"/>
    </location>
</feature>
<feature type="strand" evidence="12">
    <location>
        <begin position="55"/>
        <end position="57"/>
    </location>
</feature>
<feature type="helix" evidence="12">
    <location>
        <begin position="59"/>
        <end position="62"/>
    </location>
</feature>
<feature type="helix" evidence="12">
    <location>
        <begin position="63"/>
        <end position="74"/>
    </location>
</feature>
<feature type="helix" evidence="12">
    <location>
        <begin position="83"/>
        <end position="102"/>
    </location>
</feature>
<feature type="turn" evidence="12">
    <location>
        <begin position="103"/>
        <end position="105"/>
    </location>
</feature>
<feature type="strand" evidence="12">
    <location>
        <begin position="108"/>
        <end position="110"/>
    </location>
</feature>
<feature type="helix" evidence="12">
    <location>
        <begin position="111"/>
        <end position="125"/>
    </location>
</feature>
<evidence type="ECO:0000250" key="1">
    <source>
        <dbReference type="UniProtKB" id="P05113"/>
    </source>
</evidence>
<evidence type="ECO:0000255" key="2"/>
<evidence type="ECO:0000269" key="3">
    <source>
    </source>
</evidence>
<evidence type="ECO:0000269" key="4">
    <source>
    </source>
</evidence>
<evidence type="ECO:0000269" key="5">
    <source>
    </source>
</evidence>
<evidence type="ECO:0000269" key="6">
    <source>
    </source>
</evidence>
<evidence type="ECO:0000269" key="7">
    <source>
    </source>
</evidence>
<evidence type="ECO:0000269" key="8">
    <source ref="9"/>
</evidence>
<evidence type="ECO:0000303" key="9">
    <source>
    </source>
</evidence>
<evidence type="ECO:0000305" key="10"/>
<evidence type="ECO:0007744" key="11">
    <source>
        <dbReference type="PDB" id="3B5K"/>
    </source>
</evidence>
<evidence type="ECO:0007829" key="12">
    <source>
        <dbReference type="PDB" id="3B5K"/>
    </source>
</evidence>
<gene>
    <name type="primary">Il5</name>
    <name type="synonym">Il-5</name>
</gene>
<comment type="function">
    <text evidence="1 3 4 6">Homodimeric cytokine expressed predominantly by T-lymphocytes and NK cells that plays an important role in the survival, differentiation, and chemotaxis of eosinophils (PubMed:10444455, PubMed:1873482). Also acts on activated and resting B-cells to induce immunoglobulin production, growth, and differentiation (PubMed:3128631). Mechanistically, exerts its biological effects through a receptor composed of IL5RA subunit and the cytokine receptor common subunit beta/CSF2RB. Binding to the receptor leads to activation of various kinases including LYN, SYK and JAK2 and thereby propagates signals through the RAS-MAPK and JAK-STAT5 pathways respectively (By similarity).</text>
</comment>
<comment type="subunit">
    <text evidence="1 4">Homodimer; disulfide-linked. Interacts with IL5RA (PubMed:1873482). Interacts with CSF2RB.</text>
</comment>
<comment type="subcellular location">
    <subcellularLocation>
        <location evidence="7">Secreted</location>
    </subcellularLocation>
</comment>
<comment type="alternative products">
    <event type="alternative splicing"/>
    <isoform>
        <id>P04401-1</id>
        <name>1</name>
        <sequence type="displayed"/>
    </isoform>
    <isoform>
        <id>P04401-2</id>
        <name>2</name>
        <name evidence="9">delta2</name>
        <name evidence="9">mIL-5delta2</name>
        <sequence type="described" ref="VSP_062347"/>
    </isoform>
</comment>
<comment type="tissue specificity">
    <text evidence="7">Expressed in lymphoid cells, including spleen, thymus, lymph nodes and peripheral blood mononuclear cells.</text>
</comment>
<comment type="disruption phenotype">
    <text evidence="3">In IL-5 deletion mice, the intestinal eosinophilia that developed in WT mice during T.spiralis infection was completely abolished, revealing the importance of IL5 for the increased production and recruitment of eosinophils to the gut during infection.</text>
</comment>
<comment type="similarity">
    <text evidence="10">Belongs to the IL-5 family.</text>
</comment>